<accession>A2SF75</accession>
<comment type="function">
    <text evidence="1">Nucleotidase that shows phosphatase activity on nucleoside 5'-monophosphates.</text>
</comment>
<comment type="catalytic activity">
    <reaction evidence="1">
        <text>a ribonucleoside 5'-phosphate + H2O = a ribonucleoside + phosphate</text>
        <dbReference type="Rhea" id="RHEA:12484"/>
        <dbReference type="ChEBI" id="CHEBI:15377"/>
        <dbReference type="ChEBI" id="CHEBI:18254"/>
        <dbReference type="ChEBI" id="CHEBI:43474"/>
        <dbReference type="ChEBI" id="CHEBI:58043"/>
        <dbReference type="EC" id="3.1.3.5"/>
    </reaction>
</comment>
<comment type="cofactor">
    <cofactor evidence="1">
        <name>a divalent metal cation</name>
        <dbReference type="ChEBI" id="CHEBI:60240"/>
    </cofactor>
    <text evidence="1">Binds 1 divalent metal cation per subunit.</text>
</comment>
<comment type="subcellular location">
    <subcellularLocation>
        <location evidence="1">Cytoplasm</location>
    </subcellularLocation>
</comment>
<comment type="similarity">
    <text evidence="1">Belongs to the SurE nucleotidase family.</text>
</comment>
<comment type="sequence caution" evidence="2">
    <conflict type="erroneous initiation">
        <sequence resource="EMBL-CDS" id="ABM94214"/>
    </conflict>
</comment>
<organism>
    <name type="scientific">Methylibium petroleiphilum (strain ATCC BAA-1232 / LMG 22953 / PM1)</name>
    <dbReference type="NCBI Taxonomy" id="420662"/>
    <lineage>
        <taxon>Bacteria</taxon>
        <taxon>Pseudomonadati</taxon>
        <taxon>Pseudomonadota</taxon>
        <taxon>Betaproteobacteria</taxon>
        <taxon>Burkholderiales</taxon>
        <taxon>Sphaerotilaceae</taxon>
        <taxon>Methylibium</taxon>
    </lineage>
</organism>
<proteinExistence type="inferred from homology"/>
<feature type="chain" id="PRO_0000335263" description="5'-nucleotidase SurE">
    <location>
        <begin position="1"/>
        <end position="254"/>
    </location>
</feature>
<feature type="binding site" evidence="1">
    <location>
        <position position="8"/>
    </location>
    <ligand>
        <name>a divalent metal cation</name>
        <dbReference type="ChEBI" id="CHEBI:60240"/>
    </ligand>
</feature>
<feature type="binding site" evidence="1">
    <location>
        <position position="9"/>
    </location>
    <ligand>
        <name>a divalent metal cation</name>
        <dbReference type="ChEBI" id="CHEBI:60240"/>
    </ligand>
</feature>
<feature type="binding site" evidence="1">
    <location>
        <position position="39"/>
    </location>
    <ligand>
        <name>a divalent metal cation</name>
        <dbReference type="ChEBI" id="CHEBI:60240"/>
    </ligand>
</feature>
<feature type="binding site" evidence="1">
    <location>
        <position position="91"/>
    </location>
    <ligand>
        <name>a divalent metal cation</name>
        <dbReference type="ChEBI" id="CHEBI:60240"/>
    </ligand>
</feature>
<gene>
    <name evidence="1" type="primary">surE</name>
    <name type="ordered locus">Mpe_A1252</name>
</gene>
<protein>
    <recommendedName>
        <fullName evidence="1">5'-nucleotidase SurE</fullName>
        <ecNumber evidence="1">3.1.3.5</ecNumber>
    </recommendedName>
    <alternativeName>
        <fullName evidence="1">Nucleoside 5'-monophosphate phosphohydrolase</fullName>
    </alternativeName>
</protein>
<reference key="1">
    <citation type="journal article" date="2007" name="J. Bacteriol.">
        <title>Whole-genome analysis of the methyl tert-butyl ether-degrading beta-proteobacterium Methylibium petroleiphilum PM1.</title>
        <authorList>
            <person name="Kane S.R."/>
            <person name="Chakicherla A.Y."/>
            <person name="Chain P.S.G."/>
            <person name="Schmidt R."/>
            <person name="Shin M.W."/>
            <person name="Legler T.C."/>
            <person name="Scow K.M."/>
            <person name="Larimer F.W."/>
            <person name="Lucas S.M."/>
            <person name="Richardson P.M."/>
            <person name="Hristova K.R."/>
        </authorList>
    </citation>
    <scope>NUCLEOTIDE SEQUENCE [LARGE SCALE GENOMIC DNA]</scope>
    <source>
        <strain>ATCC BAA-1232 / LMG 22953 / PM1</strain>
    </source>
</reference>
<name>SURE_METPP</name>
<sequence length="254" mass="27067">MRILVANDDGYLAPGLAALVEACRGLGELDVVAPEQNSSGTSNALTLQRPLSVWTAANGYRYLNGTPSDCVHVALTGLLPQRPDLVVSGINNGANMGDDTLYSGTVAAAMEGYLFGIPSIAFSLSEKGWTHLDTAARVARRLIEQVIALPPVPGAWLLNVNIPDRPYEDLRGLRTTRLGRRHASEPVIRQSNPRGEPIYWIGAAGDAREAGAGTDFHAVAQGHVSVTPLQVDLTDHTCLPAWGSWLERAGEGGR</sequence>
<keyword id="KW-0963">Cytoplasm</keyword>
<keyword id="KW-0378">Hydrolase</keyword>
<keyword id="KW-0479">Metal-binding</keyword>
<keyword id="KW-0547">Nucleotide-binding</keyword>
<keyword id="KW-1185">Reference proteome</keyword>
<evidence type="ECO:0000255" key="1">
    <source>
        <dbReference type="HAMAP-Rule" id="MF_00060"/>
    </source>
</evidence>
<evidence type="ECO:0000305" key="2"/>
<dbReference type="EC" id="3.1.3.5" evidence="1"/>
<dbReference type="EMBL" id="CP000555">
    <property type="protein sequence ID" value="ABM94214.1"/>
    <property type="status" value="ALT_INIT"/>
    <property type="molecule type" value="Genomic_DNA"/>
</dbReference>
<dbReference type="RefSeq" id="WP_041929570.1">
    <property type="nucleotide sequence ID" value="NC_008825.1"/>
</dbReference>
<dbReference type="SMR" id="A2SF75"/>
<dbReference type="STRING" id="420662.Mpe_A1252"/>
<dbReference type="KEGG" id="mpt:Mpe_A1252"/>
<dbReference type="eggNOG" id="COG0496">
    <property type="taxonomic scope" value="Bacteria"/>
</dbReference>
<dbReference type="HOGENOM" id="CLU_045192_1_2_4"/>
<dbReference type="Proteomes" id="UP000000366">
    <property type="component" value="Chromosome"/>
</dbReference>
<dbReference type="GO" id="GO:0005737">
    <property type="term" value="C:cytoplasm"/>
    <property type="evidence" value="ECO:0007669"/>
    <property type="project" value="UniProtKB-SubCell"/>
</dbReference>
<dbReference type="GO" id="GO:0008254">
    <property type="term" value="F:3'-nucleotidase activity"/>
    <property type="evidence" value="ECO:0007669"/>
    <property type="project" value="TreeGrafter"/>
</dbReference>
<dbReference type="GO" id="GO:0008253">
    <property type="term" value="F:5'-nucleotidase activity"/>
    <property type="evidence" value="ECO:0007669"/>
    <property type="project" value="UniProtKB-UniRule"/>
</dbReference>
<dbReference type="GO" id="GO:0004309">
    <property type="term" value="F:exopolyphosphatase activity"/>
    <property type="evidence" value="ECO:0007669"/>
    <property type="project" value="TreeGrafter"/>
</dbReference>
<dbReference type="GO" id="GO:0046872">
    <property type="term" value="F:metal ion binding"/>
    <property type="evidence" value="ECO:0007669"/>
    <property type="project" value="UniProtKB-UniRule"/>
</dbReference>
<dbReference type="GO" id="GO:0000166">
    <property type="term" value="F:nucleotide binding"/>
    <property type="evidence" value="ECO:0007669"/>
    <property type="project" value="UniProtKB-KW"/>
</dbReference>
<dbReference type="FunFam" id="3.40.1210.10:FF:000001">
    <property type="entry name" value="5'/3'-nucleotidase SurE"/>
    <property type="match status" value="1"/>
</dbReference>
<dbReference type="Gene3D" id="3.40.1210.10">
    <property type="entry name" value="Survival protein SurE-like phosphatase/nucleotidase"/>
    <property type="match status" value="1"/>
</dbReference>
<dbReference type="HAMAP" id="MF_00060">
    <property type="entry name" value="SurE"/>
    <property type="match status" value="1"/>
</dbReference>
<dbReference type="InterPro" id="IPR030048">
    <property type="entry name" value="SurE"/>
</dbReference>
<dbReference type="InterPro" id="IPR002828">
    <property type="entry name" value="SurE-like_Pase/nucleotidase"/>
</dbReference>
<dbReference type="InterPro" id="IPR036523">
    <property type="entry name" value="SurE-like_sf"/>
</dbReference>
<dbReference type="NCBIfam" id="NF001489">
    <property type="entry name" value="PRK00346.1-3"/>
    <property type="match status" value="1"/>
</dbReference>
<dbReference type="NCBIfam" id="NF001490">
    <property type="entry name" value="PRK00346.1-4"/>
    <property type="match status" value="1"/>
</dbReference>
<dbReference type="NCBIfam" id="TIGR00087">
    <property type="entry name" value="surE"/>
    <property type="match status" value="1"/>
</dbReference>
<dbReference type="PANTHER" id="PTHR30457">
    <property type="entry name" value="5'-NUCLEOTIDASE SURE"/>
    <property type="match status" value="1"/>
</dbReference>
<dbReference type="PANTHER" id="PTHR30457:SF12">
    <property type="entry name" value="5'_3'-NUCLEOTIDASE SURE"/>
    <property type="match status" value="1"/>
</dbReference>
<dbReference type="Pfam" id="PF01975">
    <property type="entry name" value="SurE"/>
    <property type="match status" value="1"/>
</dbReference>
<dbReference type="SUPFAM" id="SSF64167">
    <property type="entry name" value="SurE-like"/>
    <property type="match status" value="1"/>
</dbReference>